<reference key="1">
    <citation type="journal article" date="2009" name="Environ. Microbiol.">
        <title>Contribution of mobile genetic elements to Desulfovibrio vulgaris genome plasticity.</title>
        <authorList>
            <person name="Walker C.B."/>
            <person name="Stolyar S."/>
            <person name="Chivian D."/>
            <person name="Pinel N."/>
            <person name="Gabster J.A."/>
            <person name="Dehal P.S."/>
            <person name="He Z."/>
            <person name="Yang Z.K."/>
            <person name="Yen H.C."/>
            <person name="Zhou J."/>
            <person name="Wall J.D."/>
            <person name="Hazen T.C."/>
            <person name="Arkin A.P."/>
            <person name="Stahl D.A."/>
        </authorList>
    </citation>
    <scope>NUCLEOTIDE SEQUENCE [LARGE SCALE GENOMIC DNA]</scope>
    <source>
        <strain>DP4</strain>
    </source>
</reference>
<dbReference type="EC" id="2.5.1.6" evidence="1"/>
<dbReference type="EMBL" id="CP000527">
    <property type="protein sequence ID" value="ABM27807.1"/>
    <property type="molecule type" value="Genomic_DNA"/>
</dbReference>
<dbReference type="RefSeq" id="WP_010939720.1">
    <property type="nucleotide sequence ID" value="NC_008751.1"/>
</dbReference>
<dbReference type="SMR" id="A1VBJ1"/>
<dbReference type="KEGG" id="dvl:Dvul_0786"/>
<dbReference type="HOGENOM" id="CLU_041802_1_1_7"/>
<dbReference type="UniPathway" id="UPA00315">
    <property type="reaction ID" value="UER00080"/>
</dbReference>
<dbReference type="Proteomes" id="UP000009173">
    <property type="component" value="Chromosome"/>
</dbReference>
<dbReference type="GO" id="GO:0005737">
    <property type="term" value="C:cytoplasm"/>
    <property type="evidence" value="ECO:0007669"/>
    <property type="project" value="UniProtKB-SubCell"/>
</dbReference>
<dbReference type="GO" id="GO:0005524">
    <property type="term" value="F:ATP binding"/>
    <property type="evidence" value="ECO:0007669"/>
    <property type="project" value="UniProtKB-UniRule"/>
</dbReference>
<dbReference type="GO" id="GO:0000287">
    <property type="term" value="F:magnesium ion binding"/>
    <property type="evidence" value="ECO:0007669"/>
    <property type="project" value="UniProtKB-UniRule"/>
</dbReference>
<dbReference type="GO" id="GO:0004478">
    <property type="term" value="F:methionine adenosyltransferase activity"/>
    <property type="evidence" value="ECO:0007669"/>
    <property type="project" value="UniProtKB-UniRule"/>
</dbReference>
<dbReference type="GO" id="GO:0006730">
    <property type="term" value="P:one-carbon metabolic process"/>
    <property type="evidence" value="ECO:0007669"/>
    <property type="project" value="UniProtKB-KW"/>
</dbReference>
<dbReference type="GO" id="GO:0006556">
    <property type="term" value="P:S-adenosylmethionine biosynthetic process"/>
    <property type="evidence" value="ECO:0007669"/>
    <property type="project" value="UniProtKB-UniRule"/>
</dbReference>
<dbReference type="CDD" id="cd18079">
    <property type="entry name" value="S-AdoMet_synt"/>
    <property type="match status" value="1"/>
</dbReference>
<dbReference type="FunFam" id="3.30.300.10:FF:000003">
    <property type="entry name" value="S-adenosylmethionine synthase"/>
    <property type="match status" value="1"/>
</dbReference>
<dbReference type="Gene3D" id="3.30.300.10">
    <property type="match status" value="3"/>
</dbReference>
<dbReference type="HAMAP" id="MF_00086">
    <property type="entry name" value="S_AdoMet_synth1"/>
    <property type="match status" value="1"/>
</dbReference>
<dbReference type="InterPro" id="IPR022631">
    <property type="entry name" value="ADOMET_SYNTHASE_CS"/>
</dbReference>
<dbReference type="InterPro" id="IPR022630">
    <property type="entry name" value="S-AdoMet_synt_C"/>
</dbReference>
<dbReference type="InterPro" id="IPR022629">
    <property type="entry name" value="S-AdoMet_synt_central"/>
</dbReference>
<dbReference type="InterPro" id="IPR022628">
    <property type="entry name" value="S-AdoMet_synt_N"/>
</dbReference>
<dbReference type="InterPro" id="IPR002133">
    <property type="entry name" value="S-AdoMet_synthetase"/>
</dbReference>
<dbReference type="InterPro" id="IPR022636">
    <property type="entry name" value="S-AdoMet_synthetase_sfam"/>
</dbReference>
<dbReference type="NCBIfam" id="TIGR01034">
    <property type="entry name" value="metK"/>
    <property type="match status" value="1"/>
</dbReference>
<dbReference type="PANTHER" id="PTHR11964">
    <property type="entry name" value="S-ADENOSYLMETHIONINE SYNTHETASE"/>
    <property type="match status" value="1"/>
</dbReference>
<dbReference type="Pfam" id="PF02773">
    <property type="entry name" value="S-AdoMet_synt_C"/>
    <property type="match status" value="1"/>
</dbReference>
<dbReference type="Pfam" id="PF02772">
    <property type="entry name" value="S-AdoMet_synt_M"/>
    <property type="match status" value="1"/>
</dbReference>
<dbReference type="Pfam" id="PF00438">
    <property type="entry name" value="S-AdoMet_synt_N"/>
    <property type="match status" value="1"/>
</dbReference>
<dbReference type="PIRSF" id="PIRSF000497">
    <property type="entry name" value="MAT"/>
    <property type="match status" value="1"/>
</dbReference>
<dbReference type="SUPFAM" id="SSF55973">
    <property type="entry name" value="S-adenosylmethionine synthetase"/>
    <property type="match status" value="3"/>
</dbReference>
<dbReference type="PROSITE" id="PS00376">
    <property type="entry name" value="ADOMET_SYNTHASE_1"/>
    <property type="match status" value="1"/>
</dbReference>
<dbReference type="PROSITE" id="PS00377">
    <property type="entry name" value="ADOMET_SYNTHASE_2"/>
    <property type="match status" value="1"/>
</dbReference>
<evidence type="ECO:0000255" key="1">
    <source>
        <dbReference type="HAMAP-Rule" id="MF_00086"/>
    </source>
</evidence>
<organism>
    <name type="scientific">Nitratidesulfovibrio vulgaris (strain DP4)</name>
    <name type="common">Desulfovibrio vulgaris</name>
    <dbReference type="NCBI Taxonomy" id="391774"/>
    <lineage>
        <taxon>Bacteria</taxon>
        <taxon>Pseudomonadati</taxon>
        <taxon>Thermodesulfobacteriota</taxon>
        <taxon>Desulfovibrionia</taxon>
        <taxon>Desulfovibrionales</taxon>
        <taxon>Desulfovibrionaceae</taxon>
        <taxon>Nitratidesulfovibrio</taxon>
    </lineage>
</organism>
<protein>
    <recommendedName>
        <fullName evidence="1">S-adenosylmethionine synthase</fullName>
        <shortName evidence="1">AdoMet synthase</shortName>
        <ecNumber evidence="1">2.5.1.6</ecNumber>
    </recommendedName>
    <alternativeName>
        <fullName evidence="1">MAT</fullName>
    </alternativeName>
    <alternativeName>
        <fullName evidence="1">Methionine adenosyltransferase</fullName>
    </alternativeName>
</protein>
<proteinExistence type="inferred from homology"/>
<feature type="chain" id="PRO_0000302910" description="S-adenosylmethionine synthase">
    <location>
        <begin position="1"/>
        <end position="391"/>
    </location>
</feature>
<feature type="region of interest" description="Flexible loop" evidence="1">
    <location>
        <begin position="103"/>
        <end position="113"/>
    </location>
</feature>
<feature type="binding site" description="in other chain" evidence="1">
    <location>
        <position position="19"/>
    </location>
    <ligand>
        <name>ATP</name>
        <dbReference type="ChEBI" id="CHEBI:30616"/>
        <note>ligand shared between two neighboring subunits</note>
    </ligand>
</feature>
<feature type="binding site" evidence="1">
    <location>
        <position position="21"/>
    </location>
    <ligand>
        <name>Mg(2+)</name>
        <dbReference type="ChEBI" id="CHEBI:18420"/>
    </ligand>
</feature>
<feature type="binding site" evidence="1">
    <location>
        <position position="47"/>
    </location>
    <ligand>
        <name>K(+)</name>
        <dbReference type="ChEBI" id="CHEBI:29103"/>
    </ligand>
</feature>
<feature type="binding site" description="in other chain" evidence="1">
    <location>
        <position position="60"/>
    </location>
    <ligand>
        <name>L-methionine</name>
        <dbReference type="ChEBI" id="CHEBI:57844"/>
        <note>ligand shared between two neighboring subunits</note>
    </ligand>
</feature>
<feature type="binding site" description="in other chain" evidence="1">
    <location>
        <position position="103"/>
    </location>
    <ligand>
        <name>L-methionine</name>
        <dbReference type="ChEBI" id="CHEBI:57844"/>
        <note>ligand shared between two neighboring subunits</note>
    </ligand>
</feature>
<feature type="binding site" description="in other chain" evidence="1">
    <location>
        <begin position="168"/>
        <end position="170"/>
    </location>
    <ligand>
        <name>ATP</name>
        <dbReference type="ChEBI" id="CHEBI:30616"/>
        <note>ligand shared between two neighboring subunits</note>
    </ligand>
</feature>
<feature type="binding site" description="in other chain" evidence="1">
    <location>
        <begin position="236"/>
        <end position="237"/>
    </location>
    <ligand>
        <name>ATP</name>
        <dbReference type="ChEBI" id="CHEBI:30616"/>
        <note>ligand shared between two neighboring subunits</note>
    </ligand>
</feature>
<feature type="binding site" evidence="1">
    <location>
        <position position="245"/>
    </location>
    <ligand>
        <name>ATP</name>
        <dbReference type="ChEBI" id="CHEBI:30616"/>
        <note>ligand shared between two neighboring subunits</note>
    </ligand>
</feature>
<feature type="binding site" evidence="1">
    <location>
        <position position="245"/>
    </location>
    <ligand>
        <name>L-methionine</name>
        <dbReference type="ChEBI" id="CHEBI:57844"/>
        <note>ligand shared between two neighboring subunits</note>
    </ligand>
</feature>
<feature type="binding site" description="in other chain" evidence="1">
    <location>
        <begin position="251"/>
        <end position="252"/>
    </location>
    <ligand>
        <name>ATP</name>
        <dbReference type="ChEBI" id="CHEBI:30616"/>
        <note>ligand shared between two neighboring subunits</note>
    </ligand>
</feature>
<feature type="binding site" evidence="1">
    <location>
        <position position="268"/>
    </location>
    <ligand>
        <name>ATP</name>
        <dbReference type="ChEBI" id="CHEBI:30616"/>
        <note>ligand shared between two neighboring subunits</note>
    </ligand>
</feature>
<feature type="binding site" evidence="1">
    <location>
        <position position="272"/>
    </location>
    <ligand>
        <name>ATP</name>
        <dbReference type="ChEBI" id="CHEBI:30616"/>
        <note>ligand shared between two neighboring subunits</note>
    </ligand>
</feature>
<feature type="binding site" description="in other chain" evidence="1">
    <location>
        <position position="276"/>
    </location>
    <ligand>
        <name>L-methionine</name>
        <dbReference type="ChEBI" id="CHEBI:57844"/>
        <note>ligand shared between two neighboring subunits</note>
    </ligand>
</feature>
<sequence>MIPSKGKYYFTSESVTEGHPDKVADQISDAVLDVLLAQDPNSRVACETLVTTGMAVIAGEITTRGYADLPHVVRETIRNIGYNSSEMGFDWQTCAVISSIDKQSADIAQGVDRATNEDQGAGDQGMMFGFACDETATLMPAPIYWAHQLSQRLTEVRKDGTVDIFRPDGKTQVSFEYVDGKPVRINNVVVSTQHKDSASQADIIDAVKTHVIRPILEPSGFFDEKACDIFINTTGRFVIGGPMGDCGLTGRKIIQDTYGGMGHHGGGAFSGKDASKVDRSGAYMARYIAKNVVASGLAPKCEVQIAYCIGVAEPVSVLVSSQGTASVPDEVLTRAVREVFDLRPFHITRRLDLLRPIYGKTSCYGHFGRELPEFTWEHTDAAADLRTAAKV</sequence>
<comment type="function">
    <text evidence="1">Catalyzes the formation of S-adenosylmethionine (AdoMet) from methionine and ATP. The overall synthetic reaction is composed of two sequential steps, AdoMet formation and the subsequent tripolyphosphate hydrolysis which occurs prior to release of AdoMet from the enzyme.</text>
</comment>
<comment type="catalytic activity">
    <reaction evidence="1">
        <text>L-methionine + ATP + H2O = S-adenosyl-L-methionine + phosphate + diphosphate</text>
        <dbReference type="Rhea" id="RHEA:21080"/>
        <dbReference type="ChEBI" id="CHEBI:15377"/>
        <dbReference type="ChEBI" id="CHEBI:30616"/>
        <dbReference type="ChEBI" id="CHEBI:33019"/>
        <dbReference type="ChEBI" id="CHEBI:43474"/>
        <dbReference type="ChEBI" id="CHEBI:57844"/>
        <dbReference type="ChEBI" id="CHEBI:59789"/>
        <dbReference type="EC" id="2.5.1.6"/>
    </reaction>
</comment>
<comment type="cofactor">
    <cofactor evidence="1">
        <name>Mg(2+)</name>
        <dbReference type="ChEBI" id="CHEBI:18420"/>
    </cofactor>
    <text evidence="1">Binds 2 divalent ions per subunit.</text>
</comment>
<comment type="cofactor">
    <cofactor evidence="1">
        <name>K(+)</name>
        <dbReference type="ChEBI" id="CHEBI:29103"/>
    </cofactor>
    <text evidence="1">Binds 1 potassium ion per subunit.</text>
</comment>
<comment type="pathway">
    <text evidence="1">Amino-acid biosynthesis; S-adenosyl-L-methionine biosynthesis; S-adenosyl-L-methionine from L-methionine: step 1/1.</text>
</comment>
<comment type="subunit">
    <text evidence="1">Homotetramer; dimer of dimers.</text>
</comment>
<comment type="subcellular location">
    <subcellularLocation>
        <location evidence="1">Cytoplasm</location>
    </subcellularLocation>
</comment>
<comment type="similarity">
    <text evidence="1">Belongs to the AdoMet synthase family.</text>
</comment>
<gene>
    <name evidence="1" type="primary">metK</name>
    <name type="ordered locus">Dvul_0786</name>
</gene>
<keyword id="KW-0067">ATP-binding</keyword>
<keyword id="KW-0963">Cytoplasm</keyword>
<keyword id="KW-0460">Magnesium</keyword>
<keyword id="KW-0479">Metal-binding</keyword>
<keyword id="KW-0547">Nucleotide-binding</keyword>
<keyword id="KW-0554">One-carbon metabolism</keyword>
<keyword id="KW-0630">Potassium</keyword>
<keyword id="KW-0808">Transferase</keyword>
<accession>A1VBJ1</accession>
<name>METK_NITV4</name>